<proteinExistence type="inferred from homology"/>
<reference key="1">
    <citation type="submission" date="2003-10" db="EMBL/GenBank/DDBJ databases">
        <title>The complete genome sequence of the alkaliphilic Bacillus clausii KSM-K16.</title>
        <authorList>
            <person name="Takaki Y."/>
            <person name="Kageyama Y."/>
            <person name="Shimamura S."/>
            <person name="Suzuki H."/>
            <person name="Nishi S."/>
            <person name="Hatada Y."/>
            <person name="Kawai S."/>
            <person name="Ito S."/>
            <person name="Horikoshi K."/>
        </authorList>
    </citation>
    <scope>NUCLEOTIDE SEQUENCE [LARGE SCALE GENOMIC DNA]</scope>
    <source>
        <strain>KSM-K16</strain>
    </source>
</reference>
<accession>Q5WFJ5</accession>
<sequence>MNRPFFIALDFDEHAKRQRFLESFAAETLDVKIGMELFYREGLSVVHELKEAGYRLFLDLKLHDIPNTVGRTMRALAELDVDVVNVHAAGGKAMMEAALEGLDAGTRAGKQRPKLIAVTQLTSTDSRMLAEELLIDKAMDEVVVRYAQLAQESGLDGVVCSAHEVPLIRAACSDRFLTVTPGIRRQVDQVGDQVRVVTPGEAKALGSWAIVVGRSITAAADPLAVYREMNQDWKGATEH</sequence>
<dbReference type="EC" id="4.1.1.23" evidence="1"/>
<dbReference type="EMBL" id="AP006627">
    <property type="protein sequence ID" value="BAD64865.1"/>
    <property type="molecule type" value="Genomic_DNA"/>
</dbReference>
<dbReference type="RefSeq" id="WP_011247173.1">
    <property type="nucleotide sequence ID" value="NC_006582.1"/>
</dbReference>
<dbReference type="SMR" id="Q5WFJ5"/>
<dbReference type="STRING" id="66692.ABC2330"/>
<dbReference type="KEGG" id="bcl:ABC2330"/>
<dbReference type="eggNOG" id="COG0284">
    <property type="taxonomic scope" value="Bacteria"/>
</dbReference>
<dbReference type="HOGENOM" id="CLU_067069_1_1_9"/>
<dbReference type="OrthoDB" id="9806203at2"/>
<dbReference type="UniPathway" id="UPA00070">
    <property type="reaction ID" value="UER00120"/>
</dbReference>
<dbReference type="Proteomes" id="UP000001168">
    <property type="component" value="Chromosome"/>
</dbReference>
<dbReference type="GO" id="GO:0005829">
    <property type="term" value="C:cytosol"/>
    <property type="evidence" value="ECO:0007669"/>
    <property type="project" value="TreeGrafter"/>
</dbReference>
<dbReference type="GO" id="GO:0004590">
    <property type="term" value="F:orotidine-5'-phosphate decarboxylase activity"/>
    <property type="evidence" value="ECO:0007669"/>
    <property type="project" value="UniProtKB-UniRule"/>
</dbReference>
<dbReference type="GO" id="GO:0006207">
    <property type="term" value="P:'de novo' pyrimidine nucleobase biosynthetic process"/>
    <property type="evidence" value="ECO:0007669"/>
    <property type="project" value="InterPro"/>
</dbReference>
<dbReference type="GO" id="GO:0044205">
    <property type="term" value="P:'de novo' UMP biosynthetic process"/>
    <property type="evidence" value="ECO:0007669"/>
    <property type="project" value="UniProtKB-UniRule"/>
</dbReference>
<dbReference type="CDD" id="cd04725">
    <property type="entry name" value="OMP_decarboxylase_like"/>
    <property type="match status" value="1"/>
</dbReference>
<dbReference type="FunFam" id="3.20.20.70:FF:000015">
    <property type="entry name" value="Orotidine 5'-phosphate decarboxylase"/>
    <property type="match status" value="1"/>
</dbReference>
<dbReference type="Gene3D" id="3.20.20.70">
    <property type="entry name" value="Aldolase class I"/>
    <property type="match status" value="1"/>
</dbReference>
<dbReference type="HAMAP" id="MF_01200_B">
    <property type="entry name" value="OMPdecase_type1_B"/>
    <property type="match status" value="1"/>
</dbReference>
<dbReference type="InterPro" id="IPR013785">
    <property type="entry name" value="Aldolase_TIM"/>
</dbReference>
<dbReference type="InterPro" id="IPR014732">
    <property type="entry name" value="OMPdecase"/>
</dbReference>
<dbReference type="InterPro" id="IPR018089">
    <property type="entry name" value="OMPdecase_AS"/>
</dbReference>
<dbReference type="InterPro" id="IPR047596">
    <property type="entry name" value="OMPdecase_bac"/>
</dbReference>
<dbReference type="InterPro" id="IPR001754">
    <property type="entry name" value="OMPdeCOase_dom"/>
</dbReference>
<dbReference type="InterPro" id="IPR011060">
    <property type="entry name" value="RibuloseP-bd_barrel"/>
</dbReference>
<dbReference type="NCBIfam" id="NF001273">
    <property type="entry name" value="PRK00230.1"/>
    <property type="match status" value="1"/>
</dbReference>
<dbReference type="NCBIfam" id="TIGR01740">
    <property type="entry name" value="pyrF"/>
    <property type="match status" value="1"/>
</dbReference>
<dbReference type="PANTHER" id="PTHR32119">
    <property type="entry name" value="OROTIDINE 5'-PHOSPHATE DECARBOXYLASE"/>
    <property type="match status" value="1"/>
</dbReference>
<dbReference type="PANTHER" id="PTHR32119:SF2">
    <property type="entry name" value="OROTIDINE 5'-PHOSPHATE DECARBOXYLASE"/>
    <property type="match status" value="1"/>
</dbReference>
<dbReference type="Pfam" id="PF00215">
    <property type="entry name" value="OMPdecase"/>
    <property type="match status" value="1"/>
</dbReference>
<dbReference type="SMART" id="SM00934">
    <property type="entry name" value="OMPdecase"/>
    <property type="match status" value="1"/>
</dbReference>
<dbReference type="SUPFAM" id="SSF51366">
    <property type="entry name" value="Ribulose-phoshate binding barrel"/>
    <property type="match status" value="1"/>
</dbReference>
<dbReference type="PROSITE" id="PS00156">
    <property type="entry name" value="OMPDECASE"/>
    <property type="match status" value="1"/>
</dbReference>
<name>PYRF_SHOC1</name>
<comment type="function">
    <text evidence="1">Catalyzes the decarboxylation of orotidine 5'-monophosphate (OMP) to uridine 5'-monophosphate (UMP).</text>
</comment>
<comment type="catalytic activity">
    <reaction evidence="1">
        <text>orotidine 5'-phosphate + H(+) = UMP + CO2</text>
        <dbReference type="Rhea" id="RHEA:11596"/>
        <dbReference type="ChEBI" id="CHEBI:15378"/>
        <dbReference type="ChEBI" id="CHEBI:16526"/>
        <dbReference type="ChEBI" id="CHEBI:57538"/>
        <dbReference type="ChEBI" id="CHEBI:57865"/>
        <dbReference type="EC" id="4.1.1.23"/>
    </reaction>
</comment>
<comment type="pathway">
    <text evidence="1">Pyrimidine metabolism; UMP biosynthesis via de novo pathway; UMP from orotate: step 2/2.</text>
</comment>
<comment type="subunit">
    <text evidence="1">Homodimer.</text>
</comment>
<comment type="similarity">
    <text evidence="1">Belongs to the OMP decarboxylase family. Type 1 subfamily.</text>
</comment>
<feature type="chain" id="PRO_0000241846" description="Orotidine 5'-phosphate decarboxylase">
    <location>
        <begin position="1"/>
        <end position="239"/>
    </location>
</feature>
<feature type="active site" description="Proton donor" evidence="1">
    <location>
        <position position="61"/>
    </location>
</feature>
<feature type="binding site" evidence="1">
    <location>
        <position position="10"/>
    </location>
    <ligand>
        <name>substrate</name>
    </ligand>
</feature>
<feature type="binding site" evidence="1">
    <location>
        <position position="32"/>
    </location>
    <ligand>
        <name>substrate</name>
    </ligand>
</feature>
<feature type="binding site" evidence="1">
    <location>
        <begin position="59"/>
        <end position="68"/>
    </location>
    <ligand>
        <name>substrate</name>
    </ligand>
</feature>
<feature type="binding site" evidence="1">
    <location>
        <position position="122"/>
    </location>
    <ligand>
        <name>substrate</name>
    </ligand>
</feature>
<feature type="binding site" evidence="1">
    <location>
        <position position="184"/>
    </location>
    <ligand>
        <name>substrate</name>
    </ligand>
</feature>
<feature type="binding site" evidence="1">
    <location>
        <position position="193"/>
    </location>
    <ligand>
        <name>substrate</name>
    </ligand>
</feature>
<feature type="binding site" evidence="1">
    <location>
        <position position="213"/>
    </location>
    <ligand>
        <name>substrate</name>
    </ligand>
</feature>
<feature type="binding site" evidence="1">
    <location>
        <position position="214"/>
    </location>
    <ligand>
        <name>substrate</name>
    </ligand>
</feature>
<evidence type="ECO:0000255" key="1">
    <source>
        <dbReference type="HAMAP-Rule" id="MF_01200"/>
    </source>
</evidence>
<gene>
    <name evidence="1" type="primary">pyrF</name>
    <name type="ordered locus">ABC2330</name>
</gene>
<keyword id="KW-0210">Decarboxylase</keyword>
<keyword id="KW-0456">Lyase</keyword>
<keyword id="KW-0665">Pyrimidine biosynthesis</keyword>
<keyword id="KW-1185">Reference proteome</keyword>
<protein>
    <recommendedName>
        <fullName evidence="1">Orotidine 5'-phosphate decarboxylase</fullName>
        <ecNumber evidence="1">4.1.1.23</ecNumber>
    </recommendedName>
    <alternativeName>
        <fullName evidence="1">OMP decarboxylase</fullName>
        <shortName evidence="1">OMPDCase</shortName>
        <shortName evidence="1">OMPdecase</shortName>
    </alternativeName>
</protein>
<organism>
    <name type="scientific">Shouchella clausii (strain KSM-K16)</name>
    <name type="common">Alkalihalobacillus clausii</name>
    <dbReference type="NCBI Taxonomy" id="66692"/>
    <lineage>
        <taxon>Bacteria</taxon>
        <taxon>Bacillati</taxon>
        <taxon>Bacillota</taxon>
        <taxon>Bacilli</taxon>
        <taxon>Bacillales</taxon>
        <taxon>Bacillaceae</taxon>
        <taxon>Shouchella</taxon>
    </lineage>
</organism>